<accession>Q6FFK1</accession>
<sequence length="289" mass="32052">MANLKEIRAKVASIKSTQKITRAMQMVAASKMRRAQERMAQGRPYADNMRRVIAHLVQANPEYKHRYMVDRPVKRVGYIVVSSDRGLAGGLNINLFKKVVQHVKAQREQSIEVEFALIGQKAVSFFKNYGGKVLGATTQLGDAPSLEQLTGSVQVMLDAFDKGELDRIYLVSNGFVNAMTQQPKVEQLVPLAPAAEGDDLNRTYGWDYIYEPEAEQLLNGLLVRYIESMVYQGVIENVACEQSARMVAMKAATDNAGQLIKDLQLIYNKLRQAAITQEISEIVGGAAAV</sequence>
<name>ATPG_ACIAD</name>
<evidence type="ECO:0000255" key="1">
    <source>
        <dbReference type="HAMAP-Rule" id="MF_00815"/>
    </source>
</evidence>
<dbReference type="EMBL" id="CR543861">
    <property type="protein sequence ID" value="CAG67156.1"/>
    <property type="molecule type" value="Genomic_DNA"/>
</dbReference>
<dbReference type="RefSeq" id="WP_004930538.1">
    <property type="nucleotide sequence ID" value="NC_005966.1"/>
</dbReference>
<dbReference type="SMR" id="Q6FFK1"/>
<dbReference type="STRING" id="202950.GCA_001485005_01916"/>
<dbReference type="GeneID" id="45232701"/>
<dbReference type="KEGG" id="aci:ACIAD0186"/>
<dbReference type="eggNOG" id="COG0224">
    <property type="taxonomic scope" value="Bacteria"/>
</dbReference>
<dbReference type="HOGENOM" id="CLU_050669_0_1_6"/>
<dbReference type="OrthoDB" id="9812769at2"/>
<dbReference type="BioCyc" id="ASP62977:ACIAD_RS00860-MONOMER"/>
<dbReference type="Proteomes" id="UP000000430">
    <property type="component" value="Chromosome"/>
</dbReference>
<dbReference type="GO" id="GO:0005886">
    <property type="term" value="C:plasma membrane"/>
    <property type="evidence" value="ECO:0007669"/>
    <property type="project" value="UniProtKB-SubCell"/>
</dbReference>
<dbReference type="GO" id="GO:0045259">
    <property type="term" value="C:proton-transporting ATP synthase complex"/>
    <property type="evidence" value="ECO:0007669"/>
    <property type="project" value="UniProtKB-KW"/>
</dbReference>
<dbReference type="GO" id="GO:0005524">
    <property type="term" value="F:ATP binding"/>
    <property type="evidence" value="ECO:0007669"/>
    <property type="project" value="UniProtKB-UniRule"/>
</dbReference>
<dbReference type="GO" id="GO:0046933">
    <property type="term" value="F:proton-transporting ATP synthase activity, rotational mechanism"/>
    <property type="evidence" value="ECO:0007669"/>
    <property type="project" value="UniProtKB-UniRule"/>
</dbReference>
<dbReference type="GO" id="GO:0042777">
    <property type="term" value="P:proton motive force-driven plasma membrane ATP synthesis"/>
    <property type="evidence" value="ECO:0007669"/>
    <property type="project" value="UniProtKB-UniRule"/>
</dbReference>
<dbReference type="CDD" id="cd12151">
    <property type="entry name" value="F1-ATPase_gamma"/>
    <property type="match status" value="1"/>
</dbReference>
<dbReference type="FunFam" id="1.10.287.80:FF:000005">
    <property type="entry name" value="ATP synthase gamma chain"/>
    <property type="match status" value="1"/>
</dbReference>
<dbReference type="Gene3D" id="3.40.1380.10">
    <property type="match status" value="1"/>
</dbReference>
<dbReference type="Gene3D" id="1.10.287.80">
    <property type="entry name" value="ATP synthase, gamma subunit, helix hairpin domain"/>
    <property type="match status" value="1"/>
</dbReference>
<dbReference type="HAMAP" id="MF_00815">
    <property type="entry name" value="ATP_synth_gamma_bact"/>
    <property type="match status" value="1"/>
</dbReference>
<dbReference type="InterPro" id="IPR035968">
    <property type="entry name" value="ATP_synth_F1_ATPase_gsu"/>
</dbReference>
<dbReference type="InterPro" id="IPR000131">
    <property type="entry name" value="ATP_synth_F1_gsu"/>
</dbReference>
<dbReference type="InterPro" id="IPR023632">
    <property type="entry name" value="ATP_synth_F1_gsu_CS"/>
</dbReference>
<dbReference type="NCBIfam" id="TIGR01146">
    <property type="entry name" value="ATPsyn_F1gamma"/>
    <property type="match status" value="1"/>
</dbReference>
<dbReference type="NCBIfam" id="NF004144">
    <property type="entry name" value="PRK05621.1-1"/>
    <property type="match status" value="1"/>
</dbReference>
<dbReference type="PANTHER" id="PTHR11693">
    <property type="entry name" value="ATP SYNTHASE GAMMA CHAIN"/>
    <property type="match status" value="1"/>
</dbReference>
<dbReference type="PANTHER" id="PTHR11693:SF22">
    <property type="entry name" value="ATP SYNTHASE SUBUNIT GAMMA, MITOCHONDRIAL"/>
    <property type="match status" value="1"/>
</dbReference>
<dbReference type="Pfam" id="PF00231">
    <property type="entry name" value="ATP-synt"/>
    <property type="match status" value="1"/>
</dbReference>
<dbReference type="PRINTS" id="PR00126">
    <property type="entry name" value="ATPASEGAMMA"/>
</dbReference>
<dbReference type="SUPFAM" id="SSF52943">
    <property type="entry name" value="ATP synthase (F1-ATPase), gamma subunit"/>
    <property type="match status" value="1"/>
</dbReference>
<dbReference type="PROSITE" id="PS00153">
    <property type="entry name" value="ATPASE_GAMMA"/>
    <property type="match status" value="1"/>
</dbReference>
<protein>
    <recommendedName>
        <fullName evidence="1">ATP synthase gamma chain</fullName>
    </recommendedName>
    <alternativeName>
        <fullName evidence="1">ATP synthase F1 sector gamma subunit</fullName>
    </alternativeName>
    <alternativeName>
        <fullName evidence="1">F-ATPase gamma subunit</fullName>
    </alternativeName>
</protein>
<feature type="chain" id="PRO_0000073218" description="ATP synthase gamma chain">
    <location>
        <begin position="1"/>
        <end position="289"/>
    </location>
</feature>
<keyword id="KW-0066">ATP synthesis</keyword>
<keyword id="KW-0997">Cell inner membrane</keyword>
<keyword id="KW-1003">Cell membrane</keyword>
<keyword id="KW-0139">CF(1)</keyword>
<keyword id="KW-0375">Hydrogen ion transport</keyword>
<keyword id="KW-0406">Ion transport</keyword>
<keyword id="KW-0472">Membrane</keyword>
<keyword id="KW-0813">Transport</keyword>
<comment type="function">
    <text evidence="1">Produces ATP from ADP in the presence of a proton gradient across the membrane. The gamma chain is believed to be important in regulating ATPase activity and the flow of protons through the CF(0) complex.</text>
</comment>
<comment type="subunit">
    <text evidence="1">F-type ATPases have 2 components, CF(1) - the catalytic core - and CF(0) - the membrane proton channel. CF(1) has five subunits: alpha(3), beta(3), gamma(1), delta(1), epsilon(1). CF(0) has three main subunits: a, b and c.</text>
</comment>
<comment type="subcellular location">
    <subcellularLocation>
        <location evidence="1">Cell inner membrane</location>
        <topology evidence="1">Peripheral membrane protein</topology>
    </subcellularLocation>
</comment>
<comment type="similarity">
    <text evidence="1">Belongs to the ATPase gamma chain family.</text>
</comment>
<organism>
    <name type="scientific">Acinetobacter baylyi (strain ATCC 33305 / BD413 / ADP1)</name>
    <dbReference type="NCBI Taxonomy" id="62977"/>
    <lineage>
        <taxon>Bacteria</taxon>
        <taxon>Pseudomonadati</taxon>
        <taxon>Pseudomonadota</taxon>
        <taxon>Gammaproteobacteria</taxon>
        <taxon>Moraxellales</taxon>
        <taxon>Moraxellaceae</taxon>
        <taxon>Acinetobacter</taxon>
    </lineage>
</organism>
<reference key="1">
    <citation type="journal article" date="2004" name="Nucleic Acids Res.">
        <title>Unique features revealed by the genome sequence of Acinetobacter sp. ADP1, a versatile and naturally transformation competent bacterium.</title>
        <authorList>
            <person name="Barbe V."/>
            <person name="Vallenet D."/>
            <person name="Fonknechten N."/>
            <person name="Kreimeyer A."/>
            <person name="Oztas S."/>
            <person name="Labarre L."/>
            <person name="Cruveiller S."/>
            <person name="Robert C."/>
            <person name="Duprat S."/>
            <person name="Wincker P."/>
            <person name="Ornston L.N."/>
            <person name="Weissenbach J."/>
            <person name="Marliere P."/>
            <person name="Cohen G.N."/>
            <person name="Medigue C."/>
        </authorList>
    </citation>
    <scope>NUCLEOTIDE SEQUENCE [LARGE SCALE GENOMIC DNA]</scope>
    <source>
        <strain>ATCC 33305 / BD413 / ADP1</strain>
    </source>
</reference>
<gene>
    <name evidence="1" type="primary">atpG</name>
    <name type="ordered locus">ACIAD0186</name>
</gene>
<proteinExistence type="inferred from homology"/>